<comment type="similarity">
    <text evidence="1">Belongs to the bacterial ribosomal protein bS16 family.</text>
</comment>
<gene>
    <name evidence="1" type="primary">rpsP</name>
    <name type="ordered locus">FMG_0526</name>
</gene>
<reference key="1">
    <citation type="journal article" date="2008" name="DNA Res.">
        <title>Complete genome sequence of Finegoldia magna, an anaerobic opportunistic pathogen.</title>
        <authorList>
            <person name="Goto T."/>
            <person name="Yamashita A."/>
            <person name="Hirakawa H."/>
            <person name="Matsutani M."/>
            <person name="Todo K."/>
            <person name="Ohshima K."/>
            <person name="Toh H."/>
            <person name="Miyamoto K."/>
            <person name="Kuhara S."/>
            <person name="Hattori M."/>
            <person name="Shimizu T."/>
            <person name="Akimoto S."/>
        </authorList>
    </citation>
    <scope>NUCLEOTIDE SEQUENCE [LARGE SCALE GENOMIC DNA]</scope>
    <source>
        <strain>ATCC 29328 / DSM 20472 / WAL 2508</strain>
    </source>
</reference>
<feature type="chain" id="PRO_1000196408" description="Small ribosomal subunit protein bS16">
    <location>
        <begin position="1"/>
        <end position="83"/>
    </location>
</feature>
<keyword id="KW-1185">Reference proteome</keyword>
<keyword id="KW-0687">Ribonucleoprotein</keyword>
<keyword id="KW-0689">Ribosomal protein</keyword>
<organism>
    <name type="scientific">Finegoldia magna (strain ATCC 29328 / DSM 20472 / WAL 2508)</name>
    <name type="common">Peptostreptococcus magnus</name>
    <dbReference type="NCBI Taxonomy" id="334413"/>
    <lineage>
        <taxon>Bacteria</taxon>
        <taxon>Bacillati</taxon>
        <taxon>Bacillota</taxon>
        <taxon>Tissierellia</taxon>
        <taxon>Tissierellales</taxon>
        <taxon>Peptoniphilaceae</taxon>
        <taxon>Finegoldia</taxon>
    </lineage>
</organism>
<protein>
    <recommendedName>
        <fullName evidence="1">Small ribosomal subunit protein bS16</fullName>
    </recommendedName>
    <alternativeName>
        <fullName evidence="2">30S ribosomal protein S16</fullName>
    </alternativeName>
</protein>
<name>RS16_FINM2</name>
<accession>B0S044</accession>
<proteinExistence type="inferred from homology"/>
<dbReference type="EMBL" id="AP008971">
    <property type="protein sequence ID" value="BAG07944.1"/>
    <property type="molecule type" value="Genomic_DNA"/>
</dbReference>
<dbReference type="RefSeq" id="WP_002835329.1">
    <property type="nucleotide sequence ID" value="NC_010376.1"/>
</dbReference>
<dbReference type="SMR" id="B0S044"/>
<dbReference type="STRING" id="334413.FMG_0526"/>
<dbReference type="GeneID" id="60839897"/>
<dbReference type="KEGG" id="fma:FMG_0526"/>
<dbReference type="eggNOG" id="COG0228">
    <property type="taxonomic scope" value="Bacteria"/>
</dbReference>
<dbReference type="HOGENOM" id="CLU_100590_5_0_9"/>
<dbReference type="Proteomes" id="UP000001319">
    <property type="component" value="Chromosome"/>
</dbReference>
<dbReference type="GO" id="GO:0005737">
    <property type="term" value="C:cytoplasm"/>
    <property type="evidence" value="ECO:0007669"/>
    <property type="project" value="UniProtKB-ARBA"/>
</dbReference>
<dbReference type="GO" id="GO:0015935">
    <property type="term" value="C:small ribosomal subunit"/>
    <property type="evidence" value="ECO:0007669"/>
    <property type="project" value="TreeGrafter"/>
</dbReference>
<dbReference type="GO" id="GO:0003735">
    <property type="term" value="F:structural constituent of ribosome"/>
    <property type="evidence" value="ECO:0007669"/>
    <property type="project" value="InterPro"/>
</dbReference>
<dbReference type="GO" id="GO:0006412">
    <property type="term" value="P:translation"/>
    <property type="evidence" value="ECO:0007669"/>
    <property type="project" value="UniProtKB-UniRule"/>
</dbReference>
<dbReference type="FunFam" id="3.30.1320.10:FF:000005">
    <property type="entry name" value="30S ribosomal protein S16"/>
    <property type="match status" value="1"/>
</dbReference>
<dbReference type="Gene3D" id="3.30.1320.10">
    <property type="match status" value="1"/>
</dbReference>
<dbReference type="HAMAP" id="MF_00385">
    <property type="entry name" value="Ribosomal_bS16"/>
    <property type="match status" value="1"/>
</dbReference>
<dbReference type="InterPro" id="IPR000307">
    <property type="entry name" value="Ribosomal_bS16"/>
</dbReference>
<dbReference type="InterPro" id="IPR020592">
    <property type="entry name" value="Ribosomal_bS16_CS"/>
</dbReference>
<dbReference type="InterPro" id="IPR023803">
    <property type="entry name" value="Ribosomal_bS16_dom_sf"/>
</dbReference>
<dbReference type="NCBIfam" id="TIGR00002">
    <property type="entry name" value="S16"/>
    <property type="match status" value="1"/>
</dbReference>
<dbReference type="PANTHER" id="PTHR12919">
    <property type="entry name" value="30S RIBOSOMAL PROTEIN S16"/>
    <property type="match status" value="1"/>
</dbReference>
<dbReference type="PANTHER" id="PTHR12919:SF20">
    <property type="entry name" value="SMALL RIBOSOMAL SUBUNIT PROTEIN BS16M"/>
    <property type="match status" value="1"/>
</dbReference>
<dbReference type="Pfam" id="PF00886">
    <property type="entry name" value="Ribosomal_S16"/>
    <property type="match status" value="1"/>
</dbReference>
<dbReference type="SUPFAM" id="SSF54565">
    <property type="entry name" value="Ribosomal protein S16"/>
    <property type="match status" value="1"/>
</dbReference>
<dbReference type="PROSITE" id="PS00732">
    <property type="entry name" value="RIBOSOMAL_S16"/>
    <property type="match status" value="1"/>
</dbReference>
<evidence type="ECO:0000255" key="1">
    <source>
        <dbReference type="HAMAP-Rule" id="MF_00385"/>
    </source>
</evidence>
<evidence type="ECO:0000305" key="2"/>
<sequence>MSVKIRLKRMGAKKKPFYRIVVADSRCPRDGKFIEEIGYYNPLVEEKTVKVDSEKVQQWIKNGAKPTDTVDRLFKNNGVYEAK</sequence>